<dbReference type="EMBL" id="CP000447">
    <property type="protein sequence ID" value="ABI70914.1"/>
    <property type="molecule type" value="Genomic_DNA"/>
</dbReference>
<dbReference type="RefSeq" id="WP_011636535.1">
    <property type="nucleotide sequence ID" value="NC_008345.1"/>
</dbReference>
<dbReference type="SMR" id="Q086A1"/>
<dbReference type="STRING" id="318167.Sfri_1061"/>
<dbReference type="KEGG" id="sfr:Sfri_1061"/>
<dbReference type="eggNOG" id="COG0249">
    <property type="taxonomic scope" value="Bacteria"/>
</dbReference>
<dbReference type="HOGENOM" id="CLU_002472_4_0_6"/>
<dbReference type="OrthoDB" id="9802448at2"/>
<dbReference type="Proteomes" id="UP000000684">
    <property type="component" value="Chromosome"/>
</dbReference>
<dbReference type="GO" id="GO:0005829">
    <property type="term" value="C:cytosol"/>
    <property type="evidence" value="ECO:0007669"/>
    <property type="project" value="TreeGrafter"/>
</dbReference>
<dbReference type="GO" id="GO:0005524">
    <property type="term" value="F:ATP binding"/>
    <property type="evidence" value="ECO:0007669"/>
    <property type="project" value="UniProtKB-UniRule"/>
</dbReference>
<dbReference type="GO" id="GO:0140664">
    <property type="term" value="F:ATP-dependent DNA damage sensor activity"/>
    <property type="evidence" value="ECO:0007669"/>
    <property type="project" value="InterPro"/>
</dbReference>
<dbReference type="GO" id="GO:0003684">
    <property type="term" value="F:damaged DNA binding"/>
    <property type="evidence" value="ECO:0007669"/>
    <property type="project" value="UniProtKB-UniRule"/>
</dbReference>
<dbReference type="GO" id="GO:0030983">
    <property type="term" value="F:mismatched DNA binding"/>
    <property type="evidence" value="ECO:0007669"/>
    <property type="project" value="InterPro"/>
</dbReference>
<dbReference type="GO" id="GO:0006298">
    <property type="term" value="P:mismatch repair"/>
    <property type="evidence" value="ECO:0007669"/>
    <property type="project" value="UniProtKB-UniRule"/>
</dbReference>
<dbReference type="CDD" id="cd03284">
    <property type="entry name" value="ABC_MutS1"/>
    <property type="match status" value="1"/>
</dbReference>
<dbReference type="FunFam" id="1.10.1420.10:FF:000002">
    <property type="entry name" value="DNA mismatch repair protein MutS"/>
    <property type="match status" value="1"/>
</dbReference>
<dbReference type="FunFam" id="3.30.420.110:FF:000001">
    <property type="entry name" value="DNA mismatch repair protein MutS"/>
    <property type="match status" value="1"/>
</dbReference>
<dbReference type="FunFam" id="3.40.1170.10:FF:000001">
    <property type="entry name" value="DNA mismatch repair protein MutS"/>
    <property type="match status" value="1"/>
</dbReference>
<dbReference type="FunFam" id="3.40.50.300:FF:000283">
    <property type="entry name" value="DNA mismatch repair protein MutS"/>
    <property type="match status" value="1"/>
</dbReference>
<dbReference type="Gene3D" id="1.10.1420.10">
    <property type="match status" value="2"/>
</dbReference>
<dbReference type="Gene3D" id="6.10.140.430">
    <property type="match status" value="1"/>
</dbReference>
<dbReference type="Gene3D" id="3.40.1170.10">
    <property type="entry name" value="DNA repair protein MutS, domain I"/>
    <property type="match status" value="1"/>
</dbReference>
<dbReference type="Gene3D" id="3.30.420.110">
    <property type="entry name" value="MutS, connector domain"/>
    <property type="match status" value="1"/>
</dbReference>
<dbReference type="Gene3D" id="3.40.50.300">
    <property type="entry name" value="P-loop containing nucleotide triphosphate hydrolases"/>
    <property type="match status" value="1"/>
</dbReference>
<dbReference type="HAMAP" id="MF_00096">
    <property type="entry name" value="MutS"/>
    <property type="match status" value="1"/>
</dbReference>
<dbReference type="InterPro" id="IPR005748">
    <property type="entry name" value="DNA_mismatch_repair_MutS"/>
</dbReference>
<dbReference type="InterPro" id="IPR007695">
    <property type="entry name" value="DNA_mismatch_repair_MutS-lik_N"/>
</dbReference>
<dbReference type="InterPro" id="IPR017261">
    <property type="entry name" value="DNA_mismatch_repair_MutS/MSH"/>
</dbReference>
<dbReference type="InterPro" id="IPR000432">
    <property type="entry name" value="DNA_mismatch_repair_MutS_C"/>
</dbReference>
<dbReference type="InterPro" id="IPR007861">
    <property type="entry name" value="DNA_mismatch_repair_MutS_clamp"/>
</dbReference>
<dbReference type="InterPro" id="IPR007696">
    <property type="entry name" value="DNA_mismatch_repair_MutS_core"/>
</dbReference>
<dbReference type="InterPro" id="IPR016151">
    <property type="entry name" value="DNA_mismatch_repair_MutS_N"/>
</dbReference>
<dbReference type="InterPro" id="IPR036187">
    <property type="entry name" value="DNA_mismatch_repair_MutS_sf"/>
</dbReference>
<dbReference type="InterPro" id="IPR007860">
    <property type="entry name" value="DNA_mmatch_repair_MutS_con_dom"/>
</dbReference>
<dbReference type="InterPro" id="IPR045076">
    <property type="entry name" value="MutS"/>
</dbReference>
<dbReference type="InterPro" id="IPR036678">
    <property type="entry name" value="MutS_con_dom_sf"/>
</dbReference>
<dbReference type="InterPro" id="IPR027417">
    <property type="entry name" value="P-loop_NTPase"/>
</dbReference>
<dbReference type="NCBIfam" id="TIGR01070">
    <property type="entry name" value="mutS1"/>
    <property type="match status" value="1"/>
</dbReference>
<dbReference type="NCBIfam" id="NF003810">
    <property type="entry name" value="PRK05399.1"/>
    <property type="match status" value="1"/>
</dbReference>
<dbReference type="PANTHER" id="PTHR11361:SF34">
    <property type="entry name" value="DNA MISMATCH REPAIR PROTEIN MSH1, MITOCHONDRIAL"/>
    <property type="match status" value="1"/>
</dbReference>
<dbReference type="PANTHER" id="PTHR11361">
    <property type="entry name" value="DNA MISMATCH REPAIR PROTEIN MUTS FAMILY MEMBER"/>
    <property type="match status" value="1"/>
</dbReference>
<dbReference type="Pfam" id="PF01624">
    <property type="entry name" value="MutS_I"/>
    <property type="match status" value="1"/>
</dbReference>
<dbReference type="Pfam" id="PF05188">
    <property type="entry name" value="MutS_II"/>
    <property type="match status" value="1"/>
</dbReference>
<dbReference type="Pfam" id="PF05192">
    <property type="entry name" value="MutS_III"/>
    <property type="match status" value="1"/>
</dbReference>
<dbReference type="Pfam" id="PF05190">
    <property type="entry name" value="MutS_IV"/>
    <property type="match status" value="1"/>
</dbReference>
<dbReference type="Pfam" id="PF00488">
    <property type="entry name" value="MutS_V"/>
    <property type="match status" value="1"/>
</dbReference>
<dbReference type="PIRSF" id="PIRSF037677">
    <property type="entry name" value="DNA_mis_repair_Msh6"/>
    <property type="match status" value="1"/>
</dbReference>
<dbReference type="SMART" id="SM00534">
    <property type="entry name" value="MUTSac"/>
    <property type="match status" value="1"/>
</dbReference>
<dbReference type="SMART" id="SM00533">
    <property type="entry name" value="MUTSd"/>
    <property type="match status" value="1"/>
</dbReference>
<dbReference type="SUPFAM" id="SSF55271">
    <property type="entry name" value="DNA repair protein MutS, domain I"/>
    <property type="match status" value="1"/>
</dbReference>
<dbReference type="SUPFAM" id="SSF53150">
    <property type="entry name" value="DNA repair protein MutS, domain II"/>
    <property type="match status" value="1"/>
</dbReference>
<dbReference type="SUPFAM" id="SSF48334">
    <property type="entry name" value="DNA repair protein MutS, domain III"/>
    <property type="match status" value="1"/>
</dbReference>
<dbReference type="SUPFAM" id="SSF52540">
    <property type="entry name" value="P-loop containing nucleoside triphosphate hydrolases"/>
    <property type="match status" value="1"/>
</dbReference>
<dbReference type="PROSITE" id="PS00486">
    <property type="entry name" value="DNA_MISMATCH_REPAIR_2"/>
    <property type="match status" value="1"/>
</dbReference>
<feature type="chain" id="PRO_1000008094" description="DNA mismatch repair protein MutS">
    <location>
        <begin position="1"/>
        <end position="861"/>
    </location>
</feature>
<feature type="binding site" evidence="1">
    <location>
        <begin position="618"/>
        <end position="625"/>
    </location>
    <ligand>
        <name>ATP</name>
        <dbReference type="ChEBI" id="CHEBI:30616"/>
    </ligand>
</feature>
<gene>
    <name evidence="1" type="primary">mutS</name>
    <name type="ordered locus">Sfri_1061</name>
</gene>
<accession>Q086A1</accession>
<comment type="function">
    <text evidence="1">This protein is involved in the repair of mismatches in DNA. It is possible that it carries out the mismatch recognition step. This protein has a weak ATPase activity.</text>
</comment>
<comment type="similarity">
    <text evidence="1">Belongs to the DNA mismatch repair MutS family.</text>
</comment>
<evidence type="ECO:0000255" key="1">
    <source>
        <dbReference type="HAMAP-Rule" id="MF_00096"/>
    </source>
</evidence>
<proteinExistence type="inferred from homology"/>
<reference key="1">
    <citation type="submission" date="2006-08" db="EMBL/GenBank/DDBJ databases">
        <title>Complete sequence of Shewanella frigidimarina NCIMB 400.</title>
        <authorList>
            <consortium name="US DOE Joint Genome Institute"/>
            <person name="Copeland A."/>
            <person name="Lucas S."/>
            <person name="Lapidus A."/>
            <person name="Barry K."/>
            <person name="Detter J.C."/>
            <person name="Glavina del Rio T."/>
            <person name="Hammon N."/>
            <person name="Israni S."/>
            <person name="Dalin E."/>
            <person name="Tice H."/>
            <person name="Pitluck S."/>
            <person name="Fredrickson J.K."/>
            <person name="Kolker E."/>
            <person name="McCuel L.A."/>
            <person name="DiChristina T."/>
            <person name="Nealson K.H."/>
            <person name="Newman D."/>
            <person name="Tiedje J.M."/>
            <person name="Zhou J."/>
            <person name="Romine M.F."/>
            <person name="Culley D.E."/>
            <person name="Serres M."/>
            <person name="Chertkov O."/>
            <person name="Brettin T."/>
            <person name="Bruce D."/>
            <person name="Han C."/>
            <person name="Tapia R."/>
            <person name="Gilna P."/>
            <person name="Schmutz J."/>
            <person name="Larimer F."/>
            <person name="Land M."/>
            <person name="Hauser L."/>
            <person name="Kyrpides N."/>
            <person name="Mikhailova N."/>
            <person name="Richardson P."/>
        </authorList>
    </citation>
    <scope>NUCLEOTIDE SEQUENCE [LARGE SCALE GENOMIC DNA]</scope>
    <source>
        <strain>NCIMB 400</strain>
    </source>
</reference>
<name>MUTS_SHEFN</name>
<organism>
    <name type="scientific">Shewanella frigidimarina (strain NCIMB 400)</name>
    <dbReference type="NCBI Taxonomy" id="318167"/>
    <lineage>
        <taxon>Bacteria</taxon>
        <taxon>Pseudomonadati</taxon>
        <taxon>Pseudomonadota</taxon>
        <taxon>Gammaproteobacteria</taxon>
        <taxon>Alteromonadales</taxon>
        <taxon>Shewanellaceae</taxon>
        <taxon>Shewanella</taxon>
    </lineage>
</organism>
<protein>
    <recommendedName>
        <fullName evidence="1">DNA mismatch repair protein MutS</fullName>
    </recommendedName>
</protein>
<sequence length="861" mass="96521">MTVIDTSDLEKHTPMMRQYLGLKAAHPDMLLFYRMGDFYELFYDDAKRASEMLGISLTARGKSGGDPIPMAGIPYHAVEGYLAKLVNIGQSVAICEQIGDPATSKGPVERQVVRIVTPGTLTDEALLQEKQDNLLAALYQGKTGFGYATLDISSGRFVVAELPTREALEAELQRTNPAELLYSEDFTDMLLINNMKGIRRRPEWEFDYDTCINLLLNQFGTKDLHGFGITDARLALQAAGCLMQYVKDTQKMALPHINSIVRFNQSESIILDAATRRNLELTQNLSGGRENTLAWVLDNTATPMGSRMLQRWIHEPLRNRQTIQYRHSAVSELIEQDLYQTLHEQLKSLGDIERIMARLALRSARPRDFSRLKQALTLLPEIQQTLAICQQPRLNTLVQLLGEFPEQHDLLERAIVDNPPMLIRDGGVIRTGYNNELDEWRKLSEGASDYLVELEAREKQQTGINTLKVGYNRVHGYYIEVSRLQSDRVPLSYQRRQTLKGTERYITPELKEYEEKVLSSQGKALALEKQLWEQLFDLLLPKLQELQQFATAAAELDILSNFAERAELFNYQCPQMSHDIGINIEAGRHPVVERVSQAAFIANPVALTPQRQMLIVTGPNMGGKSTYMRQVALITLMAHIGCFVPADHAQIGEIDRIFTRIGASDDLASGRSTFMVEMTETANILHNATANSLVLMDEIGRGTSTYDGLALAWSAAEYLAKNVSALTLFATHYFELTQLPELLPSVINVHLDAIEHDDTIAFMHSVQEGAASKSYGLQVAALAGVPASVIKAAKHKLHQLENRDMTLSQQNPTQVSMNLLPPIPEPSLALEKLAQINPDELTPKQALDYLYELKRLSHTNT</sequence>
<keyword id="KW-0067">ATP-binding</keyword>
<keyword id="KW-0227">DNA damage</keyword>
<keyword id="KW-0234">DNA repair</keyword>
<keyword id="KW-0238">DNA-binding</keyword>
<keyword id="KW-0547">Nucleotide-binding</keyword>
<keyword id="KW-1185">Reference proteome</keyword>